<feature type="chain" id="PRO_0000375022" description="Ribosomal protein uS12 methylthiotransferase RimO">
    <location>
        <begin position="1"/>
        <end position="495"/>
    </location>
</feature>
<feature type="domain" description="MTTase N-terminal" evidence="1">
    <location>
        <begin position="5"/>
        <end position="121"/>
    </location>
</feature>
<feature type="domain" description="Radical SAM core" evidence="2">
    <location>
        <begin position="184"/>
        <end position="415"/>
    </location>
</feature>
<feature type="domain" description="TRAM" evidence="1">
    <location>
        <begin position="417"/>
        <end position="484"/>
    </location>
</feature>
<feature type="region of interest" description="Disordered" evidence="3">
    <location>
        <begin position="145"/>
        <end position="183"/>
    </location>
</feature>
<feature type="binding site" evidence="1">
    <location>
        <position position="14"/>
    </location>
    <ligand>
        <name>[4Fe-4S] cluster</name>
        <dbReference type="ChEBI" id="CHEBI:49883"/>
        <label>1</label>
    </ligand>
</feature>
<feature type="binding site" evidence="1">
    <location>
        <position position="50"/>
    </location>
    <ligand>
        <name>[4Fe-4S] cluster</name>
        <dbReference type="ChEBI" id="CHEBI:49883"/>
        <label>1</label>
    </ligand>
</feature>
<feature type="binding site" evidence="1">
    <location>
        <position position="84"/>
    </location>
    <ligand>
        <name>[4Fe-4S] cluster</name>
        <dbReference type="ChEBI" id="CHEBI:49883"/>
        <label>1</label>
    </ligand>
</feature>
<feature type="binding site" evidence="1">
    <location>
        <position position="198"/>
    </location>
    <ligand>
        <name>[4Fe-4S] cluster</name>
        <dbReference type="ChEBI" id="CHEBI:49883"/>
        <label>2</label>
        <note>4Fe-4S-S-AdoMet</note>
    </ligand>
</feature>
<feature type="binding site" evidence="1">
    <location>
        <position position="202"/>
    </location>
    <ligand>
        <name>[4Fe-4S] cluster</name>
        <dbReference type="ChEBI" id="CHEBI:49883"/>
        <label>2</label>
        <note>4Fe-4S-S-AdoMet</note>
    </ligand>
</feature>
<feature type="binding site" evidence="1">
    <location>
        <position position="205"/>
    </location>
    <ligand>
        <name>[4Fe-4S] cluster</name>
        <dbReference type="ChEBI" id="CHEBI:49883"/>
        <label>2</label>
        <note>4Fe-4S-S-AdoMet</note>
    </ligand>
</feature>
<keyword id="KW-0004">4Fe-4S</keyword>
<keyword id="KW-0963">Cytoplasm</keyword>
<keyword id="KW-0408">Iron</keyword>
<keyword id="KW-0411">Iron-sulfur</keyword>
<keyword id="KW-0479">Metal-binding</keyword>
<keyword id="KW-1185">Reference proteome</keyword>
<keyword id="KW-0949">S-adenosyl-L-methionine</keyword>
<keyword id="KW-0808">Transferase</keyword>
<protein>
    <recommendedName>
        <fullName evidence="1">Ribosomal protein uS12 methylthiotransferase RimO</fullName>
        <shortName evidence="1">uS12 MTTase</shortName>
        <shortName evidence="1">uS12 methylthiotransferase</shortName>
        <ecNumber evidence="1">2.8.4.4</ecNumber>
    </recommendedName>
    <alternativeName>
        <fullName evidence="1">Ribosomal protein uS12 (aspartate-C(3))-methylthiotransferase</fullName>
    </alternativeName>
    <alternativeName>
        <fullName evidence="1">Ribosome maturation factor RimO</fullName>
    </alternativeName>
</protein>
<evidence type="ECO:0000255" key="1">
    <source>
        <dbReference type="HAMAP-Rule" id="MF_01865"/>
    </source>
</evidence>
<evidence type="ECO:0000255" key="2">
    <source>
        <dbReference type="PROSITE-ProRule" id="PRU01266"/>
    </source>
</evidence>
<evidence type="ECO:0000256" key="3">
    <source>
        <dbReference type="SAM" id="MobiDB-lite"/>
    </source>
</evidence>
<reference key="1">
    <citation type="journal article" date="2001" name="Proc. Natl. Acad. Sci. U.S.A.">
        <title>Genome sequence of an industrial microorganism Streptomyces avermitilis: deducing the ability of producing secondary metabolites.</title>
        <authorList>
            <person name="Omura S."/>
            <person name="Ikeda H."/>
            <person name="Ishikawa J."/>
            <person name="Hanamoto A."/>
            <person name="Takahashi C."/>
            <person name="Shinose M."/>
            <person name="Takahashi Y."/>
            <person name="Horikawa H."/>
            <person name="Nakazawa H."/>
            <person name="Osonoe T."/>
            <person name="Kikuchi H."/>
            <person name="Shiba T."/>
            <person name="Sakaki Y."/>
            <person name="Hattori M."/>
        </authorList>
    </citation>
    <scope>NUCLEOTIDE SEQUENCE [LARGE SCALE GENOMIC DNA]</scope>
    <source>
        <strain>ATCC 31267 / DSM 46492 / JCM 5070 / NBRC 14893 / NCIMB 12804 / NRRL 8165 / MA-4680</strain>
    </source>
</reference>
<reference key="2">
    <citation type="journal article" date="2003" name="Nat. Biotechnol.">
        <title>Complete genome sequence and comparative analysis of the industrial microorganism Streptomyces avermitilis.</title>
        <authorList>
            <person name="Ikeda H."/>
            <person name="Ishikawa J."/>
            <person name="Hanamoto A."/>
            <person name="Shinose M."/>
            <person name="Kikuchi H."/>
            <person name="Shiba T."/>
            <person name="Sakaki Y."/>
            <person name="Hattori M."/>
            <person name="Omura S."/>
        </authorList>
    </citation>
    <scope>NUCLEOTIDE SEQUENCE [LARGE SCALE GENOMIC DNA]</scope>
    <source>
        <strain>ATCC 31267 / DSM 46492 / JCM 5070 / NBRC 14893 / NCIMB 12804 / NRRL 8165 / MA-4680</strain>
    </source>
</reference>
<comment type="function">
    <text evidence="1">Catalyzes the methylthiolation of an aspartic acid residue of ribosomal protein uS12.</text>
</comment>
<comment type="catalytic activity">
    <reaction evidence="1">
        <text>L-aspartate(89)-[ribosomal protein uS12]-hydrogen + (sulfur carrier)-SH + AH2 + 2 S-adenosyl-L-methionine = 3-methylsulfanyl-L-aspartate(89)-[ribosomal protein uS12]-hydrogen + (sulfur carrier)-H + 5'-deoxyadenosine + L-methionine + A + S-adenosyl-L-homocysteine + 2 H(+)</text>
        <dbReference type="Rhea" id="RHEA:37087"/>
        <dbReference type="Rhea" id="RHEA-COMP:10460"/>
        <dbReference type="Rhea" id="RHEA-COMP:10461"/>
        <dbReference type="Rhea" id="RHEA-COMP:14737"/>
        <dbReference type="Rhea" id="RHEA-COMP:14739"/>
        <dbReference type="ChEBI" id="CHEBI:13193"/>
        <dbReference type="ChEBI" id="CHEBI:15378"/>
        <dbReference type="ChEBI" id="CHEBI:17319"/>
        <dbReference type="ChEBI" id="CHEBI:17499"/>
        <dbReference type="ChEBI" id="CHEBI:29917"/>
        <dbReference type="ChEBI" id="CHEBI:29961"/>
        <dbReference type="ChEBI" id="CHEBI:57844"/>
        <dbReference type="ChEBI" id="CHEBI:57856"/>
        <dbReference type="ChEBI" id="CHEBI:59789"/>
        <dbReference type="ChEBI" id="CHEBI:64428"/>
        <dbReference type="ChEBI" id="CHEBI:73599"/>
        <dbReference type="EC" id="2.8.4.4"/>
    </reaction>
</comment>
<comment type="cofactor">
    <cofactor evidence="1">
        <name>[4Fe-4S] cluster</name>
        <dbReference type="ChEBI" id="CHEBI:49883"/>
    </cofactor>
    <text evidence="1">Binds 2 [4Fe-4S] clusters. One cluster is coordinated with 3 cysteines and an exchangeable S-adenosyl-L-methionine.</text>
</comment>
<comment type="subcellular location">
    <subcellularLocation>
        <location evidence="1">Cytoplasm</location>
    </subcellularLocation>
</comment>
<comment type="similarity">
    <text evidence="1">Belongs to the methylthiotransferase family. RimO subfamily.</text>
</comment>
<dbReference type="EC" id="2.8.4.4" evidence="1"/>
<dbReference type="EMBL" id="BA000030">
    <property type="protein sequence ID" value="BAC70219.1"/>
    <property type="molecule type" value="Genomic_DNA"/>
</dbReference>
<dbReference type="RefSeq" id="WP_010983945.1">
    <property type="nucleotide sequence ID" value="NZ_JZJK01000086.1"/>
</dbReference>
<dbReference type="SMR" id="Q82K95"/>
<dbReference type="GeneID" id="41539593"/>
<dbReference type="KEGG" id="sma:SAVERM_2508"/>
<dbReference type="eggNOG" id="COG0621">
    <property type="taxonomic scope" value="Bacteria"/>
</dbReference>
<dbReference type="HOGENOM" id="CLU_018697_0_1_11"/>
<dbReference type="OrthoDB" id="9805215at2"/>
<dbReference type="Proteomes" id="UP000000428">
    <property type="component" value="Chromosome"/>
</dbReference>
<dbReference type="GO" id="GO:0005829">
    <property type="term" value="C:cytosol"/>
    <property type="evidence" value="ECO:0007669"/>
    <property type="project" value="TreeGrafter"/>
</dbReference>
<dbReference type="GO" id="GO:0051539">
    <property type="term" value="F:4 iron, 4 sulfur cluster binding"/>
    <property type="evidence" value="ECO:0007669"/>
    <property type="project" value="UniProtKB-UniRule"/>
</dbReference>
<dbReference type="GO" id="GO:0035599">
    <property type="term" value="F:aspartic acid methylthiotransferase activity"/>
    <property type="evidence" value="ECO:0007669"/>
    <property type="project" value="TreeGrafter"/>
</dbReference>
<dbReference type="GO" id="GO:0046872">
    <property type="term" value="F:metal ion binding"/>
    <property type="evidence" value="ECO:0007669"/>
    <property type="project" value="UniProtKB-KW"/>
</dbReference>
<dbReference type="GO" id="GO:0103039">
    <property type="term" value="F:protein methylthiotransferase activity"/>
    <property type="evidence" value="ECO:0007669"/>
    <property type="project" value="UniProtKB-EC"/>
</dbReference>
<dbReference type="GO" id="GO:0006400">
    <property type="term" value="P:tRNA modification"/>
    <property type="evidence" value="ECO:0007669"/>
    <property type="project" value="InterPro"/>
</dbReference>
<dbReference type="CDD" id="cd01335">
    <property type="entry name" value="Radical_SAM"/>
    <property type="match status" value="1"/>
</dbReference>
<dbReference type="FunFam" id="3.40.50.12160:FF:000007">
    <property type="entry name" value="Ribosomal protein S12 methylthiotransferase RimO"/>
    <property type="match status" value="1"/>
</dbReference>
<dbReference type="FunFam" id="3.80.30.20:FF:000001">
    <property type="entry name" value="tRNA-2-methylthio-N(6)-dimethylallyladenosine synthase 2"/>
    <property type="match status" value="1"/>
</dbReference>
<dbReference type="Gene3D" id="3.40.50.12160">
    <property type="entry name" value="Methylthiotransferase, N-terminal domain"/>
    <property type="match status" value="1"/>
</dbReference>
<dbReference type="Gene3D" id="2.40.50.140">
    <property type="entry name" value="Nucleic acid-binding proteins"/>
    <property type="match status" value="1"/>
</dbReference>
<dbReference type="Gene3D" id="3.80.30.20">
    <property type="entry name" value="tm_1862 like domain"/>
    <property type="match status" value="1"/>
</dbReference>
<dbReference type="HAMAP" id="MF_01865">
    <property type="entry name" value="MTTase_RimO"/>
    <property type="match status" value="1"/>
</dbReference>
<dbReference type="InterPro" id="IPR006638">
    <property type="entry name" value="Elp3/MiaA/NifB-like_rSAM"/>
</dbReference>
<dbReference type="InterPro" id="IPR005839">
    <property type="entry name" value="Methylthiotransferase"/>
</dbReference>
<dbReference type="InterPro" id="IPR020612">
    <property type="entry name" value="Methylthiotransferase_CS"/>
</dbReference>
<dbReference type="InterPro" id="IPR013848">
    <property type="entry name" value="Methylthiotransferase_N"/>
</dbReference>
<dbReference type="InterPro" id="IPR038135">
    <property type="entry name" value="Methylthiotransferase_N_sf"/>
</dbReference>
<dbReference type="InterPro" id="IPR012340">
    <property type="entry name" value="NA-bd_OB-fold"/>
</dbReference>
<dbReference type="InterPro" id="IPR005840">
    <property type="entry name" value="Ribosomal_uS12_MeSTrfase_RimO"/>
</dbReference>
<dbReference type="InterPro" id="IPR007197">
    <property type="entry name" value="rSAM"/>
</dbReference>
<dbReference type="InterPro" id="IPR023404">
    <property type="entry name" value="rSAM_horseshoe"/>
</dbReference>
<dbReference type="InterPro" id="IPR002792">
    <property type="entry name" value="TRAM_dom"/>
</dbReference>
<dbReference type="NCBIfam" id="TIGR01125">
    <property type="entry name" value="30S ribosomal protein S12 methylthiotransferase RimO"/>
    <property type="match status" value="1"/>
</dbReference>
<dbReference type="NCBIfam" id="TIGR00089">
    <property type="entry name" value="MiaB/RimO family radical SAM methylthiotransferase"/>
    <property type="match status" value="1"/>
</dbReference>
<dbReference type="PANTHER" id="PTHR43837">
    <property type="entry name" value="RIBOSOMAL PROTEIN S12 METHYLTHIOTRANSFERASE RIMO"/>
    <property type="match status" value="1"/>
</dbReference>
<dbReference type="PANTHER" id="PTHR43837:SF1">
    <property type="entry name" value="RIBOSOMAL PROTEIN US12 METHYLTHIOTRANSFERASE RIMO"/>
    <property type="match status" value="1"/>
</dbReference>
<dbReference type="Pfam" id="PF04055">
    <property type="entry name" value="Radical_SAM"/>
    <property type="match status" value="1"/>
</dbReference>
<dbReference type="Pfam" id="PF18693">
    <property type="entry name" value="TRAM_2"/>
    <property type="match status" value="1"/>
</dbReference>
<dbReference type="Pfam" id="PF00919">
    <property type="entry name" value="UPF0004"/>
    <property type="match status" value="1"/>
</dbReference>
<dbReference type="SFLD" id="SFLDG01082">
    <property type="entry name" value="B12-binding_domain_containing"/>
    <property type="match status" value="1"/>
</dbReference>
<dbReference type="SFLD" id="SFLDS00029">
    <property type="entry name" value="Radical_SAM"/>
    <property type="match status" value="1"/>
</dbReference>
<dbReference type="SFLD" id="SFLDF00274">
    <property type="entry name" value="ribosomal_protein_S12_methylth"/>
    <property type="match status" value="1"/>
</dbReference>
<dbReference type="SMART" id="SM00729">
    <property type="entry name" value="Elp3"/>
    <property type="match status" value="1"/>
</dbReference>
<dbReference type="SUPFAM" id="SSF102114">
    <property type="entry name" value="Radical SAM enzymes"/>
    <property type="match status" value="1"/>
</dbReference>
<dbReference type="PROSITE" id="PS51449">
    <property type="entry name" value="MTTASE_N"/>
    <property type="match status" value="1"/>
</dbReference>
<dbReference type="PROSITE" id="PS01278">
    <property type="entry name" value="MTTASE_RADICAL"/>
    <property type="match status" value="1"/>
</dbReference>
<dbReference type="PROSITE" id="PS51918">
    <property type="entry name" value="RADICAL_SAM"/>
    <property type="match status" value="1"/>
</dbReference>
<dbReference type="PROSITE" id="PS50926">
    <property type="entry name" value="TRAM"/>
    <property type="match status" value="1"/>
</dbReference>
<accession>Q82K95</accession>
<name>RIMO_STRAW</name>
<gene>
    <name evidence="1" type="primary">rimO</name>
    <name type="ordered locus">SAV_2508</name>
</gene>
<proteinExistence type="inferred from homology"/>
<sequence length="495" mass="53257">MPERRTVALVTLGCARNEVDSEELAGRLEADGWQLVEDAEDADVAVVNTCGFVEAAKKDSVDALLEANDLKGHGRTQAVVAVGCMAERYGKELAEALPEADGVLGFDDYTNISDRLQTILNGGIHAAHTPRDRRKLLPISPAERQSAGADVALPGHGAPEGLPEDLPEGLAPESGPRAPLRRRLDGSPVASVKLASGCDRRCSFCAIPSFRGSFISRRPSDVLGETRWLAEQGVKEVMLVSENNTSYGKDLGDIRLLETLLPELAEVDGIERVRVSYLQPAEMRPGLIDVLTSTPKIAPYFDLSFQHSAPDVLRAMRRFGDTDRFLELLDTIRSKAPQAGVRSNFIVGFPGETEADLAELERFLTGARLDAIGVFGYSDEEGTEAATYGHKLDEDVVAARLARVSRLAEELVAQRAEERVGETVHVLVESIDDEEGAVGRAEHQAPETDGQVLFTSGEGLTVGRMVEAKVVGTEGVDLVAEPLPGSLVCTEEAGR</sequence>
<organism>
    <name type="scientific">Streptomyces avermitilis (strain ATCC 31267 / DSM 46492 / JCM 5070 / NBRC 14893 / NCIMB 12804 / NRRL 8165 / MA-4680)</name>
    <dbReference type="NCBI Taxonomy" id="227882"/>
    <lineage>
        <taxon>Bacteria</taxon>
        <taxon>Bacillati</taxon>
        <taxon>Actinomycetota</taxon>
        <taxon>Actinomycetes</taxon>
        <taxon>Kitasatosporales</taxon>
        <taxon>Streptomycetaceae</taxon>
        <taxon>Streptomyces</taxon>
    </lineage>
</organism>